<reference key="1">
    <citation type="journal article" date="2003" name="Mol. Microbiol.">
        <title>Genome-based analysis of virulence genes in a non-biofilm-forming Staphylococcus epidermidis strain (ATCC 12228).</title>
        <authorList>
            <person name="Zhang Y.-Q."/>
            <person name="Ren S.-X."/>
            <person name="Li H.-L."/>
            <person name="Wang Y.-X."/>
            <person name="Fu G."/>
            <person name="Yang J."/>
            <person name="Qin Z.-Q."/>
            <person name="Miao Y.-G."/>
            <person name="Wang W.-Y."/>
            <person name="Chen R.-S."/>
            <person name="Shen Y."/>
            <person name="Chen Z."/>
            <person name="Yuan Z.-H."/>
            <person name="Zhao G.-P."/>
            <person name="Qu D."/>
            <person name="Danchin A."/>
            <person name="Wen Y.-M."/>
        </authorList>
    </citation>
    <scope>NUCLEOTIDE SEQUENCE [LARGE SCALE GENOMIC DNA]</scope>
    <source>
        <strain>ATCC 12228 / FDA PCI 1200</strain>
    </source>
</reference>
<feature type="chain" id="PRO_0000161763" description="DNA ligase">
    <location>
        <begin position="1"/>
        <end position="665"/>
    </location>
</feature>
<feature type="domain" description="BRCT" evidence="1">
    <location>
        <begin position="586"/>
        <end position="665"/>
    </location>
</feature>
<feature type="active site" description="N6-AMP-lysine intermediate" evidence="1">
    <location>
        <position position="112"/>
    </location>
</feature>
<feature type="binding site" evidence="1">
    <location>
        <begin position="32"/>
        <end position="36"/>
    </location>
    <ligand>
        <name>NAD(+)</name>
        <dbReference type="ChEBI" id="CHEBI:57540"/>
    </ligand>
</feature>
<feature type="binding site" evidence="1">
    <location>
        <begin position="81"/>
        <end position="82"/>
    </location>
    <ligand>
        <name>NAD(+)</name>
        <dbReference type="ChEBI" id="CHEBI:57540"/>
    </ligand>
</feature>
<feature type="binding site" evidence="1">
    <location>
        <position position="110"/>
    </location>
    <ligand>
        <name>NAD(+)</name>
        <dbReference type="ChEBI" id="CHEBI:57540"/>
    </ligand>
</feature>
<feature type="binding site" evidence="1">
    <location>
        <position position="133"/>
    </location>
    <ligand>
        <name>NAD(+)</name>
        <dbReference type="ChEBI" id="CHEBI:57540"/>
    </ligand>
</feature>
<feature type="binding site" evidence="1">
    <location>
        <position position="167"/>
    </location>
    <ligand>
        <name>NAD(+)</name>
        <dbReference type="ChEBI" id="CHEBI:57540"/>
    </ligand>
</feature>
<feature type="binding site" evidence="1">
    <location>
        <position position="283"/>
    </location>
    <ligand>
        <name>NAD(+)</name>
        <dbReference type="ChEBI" id="CHEBI:57540"/>
    </ligand>
</feature>
<feature type="binding site" evidence="1">
    <location>
        <position position="307"/>
    </location>
    <ligand>
        <name>NAD(+)</name>
        <dbReference type="ChEBI" id="CHEBI:57540"/>
    </ligand>
</feature>
<feature type="binding site" evidence="1">
    <location>
        <position position="401"/>
    </location>
    <ligand>
        <name>Zn(2+)</name>
        <dbReference type="ChEBI" id="CHEBI:29105"/>
    </ligand>
</feature>
<feature type="binding site" evidence="1">
    <location>
        <position position="404"/>
    </location>
    <ligand>
        <name>Zn(2+)</name>
        <dbReference type="ChEBI" id="CHEBI:29105"/>
    </ligand>
</feature>
<feature type="binding site" evidence="1">
    <location>
        <position position="419"/>
    </location>
    <ligand>
        <name>Zn(2+)</name>
        <dbReference type="ChEBI" id="CHEBI:29105"/>
    </ligand>
</feature>
<feature type="binding site" evidence="1">
    <location>
        <position position="424"/>
    </location>
    <ligand>
        <name>Zn(2+)</name>
        <dbReference type="ChEBI" id="CHEBI:29105"/>
    </ligand>
</feature>
<dbReference type="EC" id="6.5.1.2" evidence="1"/>
<dbReference type="EMBL" id="AE015929">
    <property type="protein sequence ID" value="AAO05188.1"/>
    <property type="molecule type" value="Genomic_DNA"/>
</dbReference>
<dbReference type="RefSeq" id="NP_765144.1">
    <property type="nucleotide sequence ID" value="NC_004461.1"/>
</dbReference>
<dbReference type="RefSeq" id="WP_002484896.1">
    <property type="nucleotide sequence ID" value="NZ_WBME01000010.1"/>
</dbReference>
<dbReference type="SMR" id="Q8CRU0"/>
<dbReference type="KEGG" id="sep:SE_1589"/>
<dbReference type="PATRIC" id="fig|176280.10.peg.1553"/>
<dbReference type="eggNOG" id="COG0272">
    <property type="taxonomic scope" value="Bacteria"/>
</dbReference>
<dbReference type="HOGENOM" id="CLU_007764_2_1_9"/>
<dbReference type="OrthoDB" id="9759736at2"/>
<dbReference type="Proteomes" id="UP000001411">
    <property type="component" value="Chromosome"/>
</dbReference>
<dbReference type="GO" id="GO:0005829">
    <property type="term" value="C:cytosol"/>
    <property type="evidence" value="ECO:0007669"/>
    <property type="project" value="TreeGrafter"/>
</dbReference>
<dbReference type="GO" id="GO:0003677">
    <property type="term" value="F:DNA binding"/>
    <property type="evidence" value="ECO:0007669"/>
    <property type="project" value="InterPro"/>
</dbReference>
<dbReference type="GO" id="GO:0003911">
    <property type="term" value="F:DNA ligase (NAD+) activity"/>
    <property type="evidence" value="ECO:0007669"/>
    <property type="project" value="UniProtKB-UniRule"/>
</dbReference>
<dbReference type="GO" id="GO:0046872">
    <property type="term" value="F:metal ion binding"/>
    <property type="evidence" value="ECO:0007669"/>
    <property type="project" value="UniProtKB-KW"/>
</dbReference>
<dbReference type="GO" id="GO:0006281">
    <property type="term" value="P:DNA repair"/>
    <property type="evidence" value="ECO:0007669"/>
    <property type="project" value="UniProtKB-KW"/>
</dbReference>
<dbReference type="GO" id="GO:0006260">
    <property type="term" value="P:DNA replication"/>
    <property type="evidence" value="ECO:0007669"/>
    <property type="project" value="UniProtKB-KW"/>
</dbReference>
<dbReference type="CDD" id="cd17748">
    <property type="entry name" value="BRCT_DNA_ligase_like"/>
    <property type="match status" value="1"/>
</dbReference>
<dbReference type="CDD" id="cd00114">
    <property type="entry name" value="LIGANc"/>
    <property type="match status" value="1"/>
</dbReference>
<dbReference type="FunFam" id="1.10.150.20:FF:000006">
    <property type="entry name" value="DNA ligase"/>
    <property type="match status" value="1"/>
</dbReference>
<dbReference type="FunFam" id="1.10.150.20:FF:000007">
    <property type="entry name" value="DNA ligase"/>
    <property type="match status" value="1"/>
</dbReference>
<dbReference type="FunFam" id="1.10.287.610:FF:000002">
    <property type="entry name" value="DNA ligase"/>
    <property type="match status" value="1"/>
</dbReference>
<dbReference type="FunFam" id="2.40.50.140:FF:000012">
    <property type="entry name" value="DNA ligase"/>
    <property type="match status" value="1"/>
</dbReference>
<dbReference type="FunFam" id="3.30.470.30:FF:000001">
    <property type="entry name" value="DNA ligase"/>
    <property type="match status" value="1"/>
</dbReference>
<dbReference type="FunFam" id="6.20.10.30:FF:000002">
    <property type="entry name" value="DNA ligase"/>
    <property type="match status" value="1"/>
</dbReference>
<dbReference type="Gene3D" id="6.20.10.30">
    <property type="match status" value="1"/>
</dbReference>
<dbReference type="Gene3D" id="1.10.150.20">
    <property type="entry name" value="5' to 3' exonuclease, C-terminal subdomain"/>
    <property type="match status" value="2"/>
</dbReference>
<dbReference type="Gene3D" id="3.40.50.10190">
    <property type="entry name" value="BRCT domain"/>
    <property type="match status" value="1"/>
</dbReference>
<dbReference type="Gene3D" id="3.30.470.30">
    <property type="entry name" value="DNA ligase/mRNA capping enzyme"/>
    <property type="match status" value="1"/>
</dbReference>
<dbReference type="Gene3D" id="1.10.287.610">
    <property type="entry name" value="Helix hairpin bin"/>
    <property type="match status" value="1"/>
</dbReference>
<dbReference type="Gene3D" id="2.40.50.140">
    <property type="entry name" value="Nucleic acid-binding proteins"/>
    <property type="match status" value="1"/>
</dbReference>
<dbReference type="HAMAP" id="MF_01588">
    <property type="entry name" value="DNA_ligase_A"/>
    <property type="match status" value="1"/>
</dbReference>
<dbReference type="InterPro" id="IPR001357">
    <property type="entry name" value="BRCT_dom"/>
</dbReference>
<dbReference type="InterPro" id="IPR036420">
    <property type="entry name" value="BRCT_dom_sf"/>
</dbReference>
<dbReference type="InterPro" id="IPR041663">
    <property type="entry name" value="DisA/LigA_HHH"/>
</dbReference>
<dbReference type="InterPro" id="IPR001679">
    <property type="entry name" value="DNA_ligase"/>
</dbReference>
<dbReference type="InterPro" id="IPR018239">
    <property type="entry name" value="DNA_ligase_AS"/>
</dbReference>
<dbReference type="InterPro" id="IPR033136">
    <property type="entry name" value="DNA_ligase_CS"/>
</dbReference>
<dbReference type="InterPro" id="IPR013839">
    <property type="entry name" value="DNAligase_adenylation"/>
</dbReference>
<dbReference type="InterPro" id="IPR013840">
    <property type="entry name" value="DNAligase_N"/>
</dbReference>
<dbReference type="InterPro" id="IPR003583">
    <property type="entry name" value="Hlx-hairpin-Hlx_DNA-bd_motif"/>
</dbReference>
<dbReference type="InterPro" id="IPR012340">
    <property type="entry name" value="NA-bd_OB-fold"/>
</dbReference>
<dbReference type="InterPro" id="IPR004150">
    <property type="entry name" value="NAD_DNA_ligase_OB"/>
</dbReference>
<dbReference type="InterPro" id="IPR010994">
    <property type="entry name" value="RuvA_2-like"/>
</dbReference>
<dbReference type="InterPro" id="IPR004149">
    <property type="entry name" value="Znf_DNAligase_C4"/>
</dbReference>
<dbReference type="NCBIfam" id="TIGR00575">
    <property type="entry name" value="dnlj"/>
    <property type="match status" value="1"/>
</dbReference>
<dbReference type="NCBIfam" id="NF005932">
    <property type="entry name" value="PRK07956.1"/>
    <property type="match status" value="1"/>
</dbReference>
<dbReference type="PANTHER" id="PTHR23389">
    <property type="entry name" value="CHROMOSOME TRANSMISSION FIDELITY FACTOR 18"/>
    <property type="match status" value="1"/>
</dbReference>
<dbReference type="PANTHER" id="PTHR23389:SF9">
    <property type="entry name" value="DNA LIGASE"/>
    <property type="match status" value="1"/>
</dbReference>
<dbReference type="Pfam" id="PF00533">
    <property type="entry name" value="BRCT"/>
    <property type="match status" value="1"/>
</dbReference>
<dbReference type="Pfam" id="PF01653">
    <property type="entry name" value="DNA_ligase_aden"/>
    <property type="match status" value="1"/>
</dbReference>
<dbReference type="Pfam" id="PF03120">
    <property type="entry name" value="DNA_ligase_OB"/>
    <property type="match status" value="1"/>
</dbReference>
<dbReference type="Pfam" id="PF03119">
    <property type="entry name" value="DNA_ligase_ZBD"/>
    <property type="match status" value="1"/>
</dbReference>
<dbReference type="Pfam" id="PF12826">
    <property type="entry name" value="HHH_2"/>
    <property type="match status" value="1"/>
</dbReference>
<dbReference type="Pfam" id="PF14520">
    <property type="entry name" value="HHH_5"/>
    <property type="match status" value="1"/>
</dbReference>
<dbReference type="Pfam" id="PF22745">
    <property type="entry name" value="Nlig-Ia"/>
    <property type="match status" value="1"/>
</dbReference>
<dbReference type="PIRSF" id="PIRSF001604">
    <property type="entry name" value="LigA"/>
    <property type="match status" value="1"/>
</dbReference>
<dbReference type="SMART" id="SM00292">
    <property type="entry name" value="BRCT"/>
    <property type="match status" value="1"/>
</dbReference>
<dbReference type="SMART" id="SM00278">
    <property type="entry name" value="HhH1"/>
    <property type="match status" value="3"/>
</dbReference>
<dbReference type="SMART" id="SM00532">
    <property type="entry name" value="LIGANc"/>
    <property type="match status" value="1"/>
</dbReference>
<dbReference type="SUPFAM" id="SSF52113">
    <property type="entry name" value="BRCT domain"/>
    <property type="match status" value="1"/>
</dbReference>
<dbReference type="SUPFAM" id="SSF56091">
    <property type="entry name" value="DNA ligase/mRNA capping enzyme, catalytic domain"/>
    <property type="match status" value="1"/>
</dbReference>
<dbReference type="SUPFAM" id="SSF50249">
    <property type="entry name" value="Nucleic acid-binding proteins"/>
    <property type="match status" value="1"/>
</dbReference>
<dbReference type="SUPFAM" id="SSF47781">
    <property type="entry name" value="RuvA domain 2-like"/>
    <property type="match status" value="1"/>
</dbReference>
<dbReference type="PROSITE" id="PS50172">
    <property type="entry name" value="BRCT"/>
    <property type="match status" value="1"/>
</dbReference>
<dbReference type="PROSITE" id="PS01055">
    <property type="entry name" value="DNA_LIGASE_N1"/>
    <property type="match status" value="1"/>
</dbReference>
<dbReference type="PROSITE" id="PS01056">
    <property type="entry name" value="DNA_LIGASE_N2"/>
    <property type="match status" value="1"/>
</dbReference>
<keyword id="KW-0227">DNA damage</keyword>
<keyword id="KW-0234">DNA repair</keyword>
<keyword id="KW-0235">DNA replication</keyword>
<keyword id="KW-0436">Ligase</keyword>
<keyword id="KW-0460">Magnesium</keyword>
<keyword id="KW-0464">Manganese</keyword>
<keyword id="KW-0479">Metal-binding</keyword>
<keyword id="KW-0520">NAD</keyword>
<keyword id="KW-0862">Zinc</keyword>
<name>DNLJ_STAES</name>
<accession>Q8CRU0</accession>
<comment type="function">
    <text evidence="1">DNA ligase that catalyzes the formation of phosphodiester linkages between 5'-phosphoryl and 3'-hydroxyl groups in double-stranded DNA using NAD as a coenzyme and as the energy source for the reaction. It is essential for DNA replication and repair of damaged DNA.</text>
</comment>
<comment type="catalytic activity">
    <reaction evidence="1">
        <text>NAD(+) + (deoxyribonucleotide)n-3'-hydroxyl + 5'-phospho-(deoxyribonucleotide)m = (deoxyribonucleotide)n+m + AMP + beta-nicotinamide D-nucleotide.</text>
        <dbReference type="EC" id="6.5.1.2"/>
    </reaction>
</comment>
<comment type="cofactor">
    <cofactor evidence="1">
        <name>Mg(2+)</name>
        <dbReference type="ChEBI" id="CHEBI:18420"/>
    </cofactor>
    <cofactor evidence="1">
        <name>Mn(2+)</name>
        <dbReference type="ChEBI" id="CHEBI:29035"/>
    </cofactor>
</comment>
<comment type="similarity">
    <text evidence="1">Belongs to the NAD-dependent DNA ligase family. LigA subfamily.</text>
</comment>
<protein>
    <recommendedName>
        <fullName evidence="1">DNA ligase</fullName>
        <ecNumber evidence="1">6.5.1.2</ecNumber>
    </recommendedName>
    <alternativeName>
        <fullName evidence="1">Polydeoxyribonucleotide synthase [NAD(+)]</fullName>
    </alternativeName>
</protein>
<organism>
    <name type="scientific">Staphylococcus epidermidis (strain ATCC 12228 / FDA PCI 1200)</name>
    <dbReference type="NCBI Taxonomy" id="176280"/>
    <lineage>
        <taxon>Bacteria</taxon>
        <taxon>Bacillati</taxon>
        <taxon>Bacillota</taxon>
        <taxon>Bacilli</taxon>
        <taxon>Bacillales</taxon>
        <taxon>Staphylococcaceae</taxon>
        <taxon>Staphylococcus</taxon>
    </lineage>
</organism>
<sequence>MQDVKKRVEKLHDLLNQYSYEYYVQDNPSVPDSEYDKLLHELIEIEEKYPEFKSTDSPTVRVGGEAQSSFEKVNHDTPMLSLGNAFNEEDLRKFDQRIRDSIGKVEYMCELKIDGLAVSLKYENGRFVQGLTRGDGTTGEDITENLRTIHAIPLKIKEPLNFEVRGEAYMPRRSFIHLNNEKEQNGEQPFANPRNAAAGSLRQLDSKLAAKRKLSVFLYSVNDLTEFNATTQSEALEELDQLGFKTNQERERVSDIEGVLNYIEKWTSKRGSLSYDIDGIVIKVNDLSQQEEMGYTQKSPRWAIAYKFPAEEVITKLLDIELSIGRTGVVTPTAILEPVKVAGTTVSRASLHNEDLIHERDIRIGDSVVIKKAGDIIPEVVKSILDRRPNESEIYHMPTHCPSCGHELVRIEGEVALRCINPKCQAQLIEGLIHFVSRQAMNIDGLGTKIIHQLYENQLIKDVADIFYLKEEDLLPLERMGKKKVDNLLLAIEKSKEQSLEHLLFGLGIRHLGVKASQVLAERYETMDQLFKVTESELIEIQDIGDKLAQSVVTYLENSDIRSLIEKLSNKNVNMSYKGIKTTEIEGHPDFSGKTIVLTGKLEQMTRNEASEWLKMQGAKVTSSVTKSTDIVIAGADAGSKLAKAEKYGTEIWTEAAFIEKQNGI</sequence>
<proteinExistence type="inferred from homology"/>
<gene>
    <name evidence="1" type="primary">ligA</name>
    <name type="synonym">lig</name>
    <name type="ordered locus">SE_1589</name>
</gene>
<evidence type="ECO:0000255" key="1">
    <source>
        <dbReference type="HAMAP-Rule" id="MF_01588"/>
    </source>
</evidence>